<accession>Q5LCA5</accession>
<name>THIC_BACFN</name>
<feature type="chain" id="PRO_0000242241" description="Phosphomethylpyrimidine synthase">
    <location>
        <begin position="1"/>
        <end position="564"/>
    </location>
</feature>
<feature type="binding site" evidence="1">
    <location>
        <position position="203"/>
    </location>
    <ligand>
        <name>substrate</name>
    </ligand>
</feature>
<feature type="binding site" evidence="1">
    <location>
        <position position="232"/>
    </location>
    <ligand>
        <name>substrate</name>
    </ligand>
</feature>
<feature type="binding site" evidence="1">
    <location>
        <position position="261"/>
    </location>
    <ligand>
        <name>substrate</name>
    </ligand>
</feature>
<feature type="binding site" evidence="1">
    <location>
        <position position="297"/>
    </location>
    <ligand>
        <name>substrate</name>
    </ligand>
</feature>
<feature type="binding site" evidence="1">
    <location>
        <begin position="317"/>
        <end position="319"/>
    </location>
    <ligand>
        <name>substrate</name>
    </ligand>
</feature>
<feature type="binding site" evidence="1">
    <location>
        <begin position="358"/>
        <end position="361"/>
    </location>
    <ligand>
        <name>substrate</name>
    </ligand>
</feature>
<feature type="binding site" evidence="1">
    <location>
        <position position="397"/>
    </location>
    <ligand>
        <name>substrate</name>
    </ligand>
</feature>
<feature type="binding site" evidence="1">
    <location>
        <position position="401"/>
    </location>
    <ligand>
        <name>Zn(2+)</name>
        <dbReference type="ChEBI" id="CHEBI:29105"/>
    </ligand>
</feature>
<feature type="binding site" evidence="1">
    <location>
        <position position="424"/>
    </location>
    <ligand>
        <name>substrate</name>
    </ligand>
</feature>
<feature type="binding site" evidence="1">
    <location>
        <position position="465"/>
    </location>
    <ligand>
        <name>Zn(2+)</name>
        <dbReference type="ChEBI" id="CHEBI:29105"/>
    </ligand>
</feature>
<feature type="binding site" evidence="1">
    <location>
        <position position="541"/>
    </location>
    <ligand>
        <name>[4Fe-4S] cluster</name>
        <dbReference type="ChEBI" id="CHEBI:49883"/>
        <note>4Fe-4S-S-AdoMet</note>
    </ligand>
</feature>
<feature type="binding site" evidence="1">
    <location>
        <position position="544"/>
    </location>
    <ligand>
        <name>[4Fe-4S] cluster</name>
        <dbReference type="ChEBI" id="CHEBI:49883"/>
        <note>4Fe-4S-S-AdoMet</note>
    </ligand>
</feature>
<feature type="binding site" evidence="1">
    <location>
        <position position="549"/>
    </location>
    <ligand>
        <name>[4Fe-4S] cluster</name>
        <dbReference type="ChEBI" id="CHEBI:49883"/>
        <note>4Fe-4S-S-AdoMet</note>
    </ligand>
</feature>
<sequence length="564" mass="64065">MEQRIKFPRSEKVYLSGKLFPEIRVGMRKVEQVPSTTFEGEKKVITPNPHVYIYDTSGPFSDPDIEIDLKKGLPRLREEWILNRGDVEQLPEISSEYGRMRRDDGSLDHLRFEHIALPYRAKAGRHITQMAYAKQGIVTPEMEYVAIRENMNCEELGIETHITPEFVRQEIAEGRAVLPANINHPEAEPMIIGRNFLVKINTNIGNSATTSSIDEEVEKAMWSCKWGGDTLMDLSTGENIHETREWIIRNCPVPVGTVPIYQALEKVNGKVEDLTWELYRDTLIEQCEQGVDYFTIHAGIRRHNVHLAEKRLCGIVSRGGSIMSKWCLVHDRESFLYEHFDDICDILAQYDVAVSLGDGLRPGSTHDANDEAQFAELDTMGELVVRAWEKNVQAFIEGPGHVPMHKIRENMERQIEKCHNAPFYTLGPLVTDIAPGYDHITSAIGAAQIGWLGTAMLCYVTPKEHLALPDKEDVRVGVITYKIAAHAADLAKGHPGAQVRDNALSKARYEFRWKDQFDLSLDPERAFSYFHAGRHTDGEYCTMCGPNFCAMRLSRDLKKTQKQK</sequence>
<gene>
    <name evidence="1" type="primary">thiC</name>
    <name type="ordered locus">BF2560</name>
</gene>
<proteinExistence type="inferred from homology"/>
<dbReference type="EC" id="4.1.99.17" evidence="1"/>
<dbReference type="EMBL" id="CR626927">
    <property type="protein sequence ID" value="CAH08260.1"/>
    <property type="molecule type" value="Genomic_DNA"/>
</dbReference>
<dbReference type="RefSeq" id="WP_005815685.1">
    <property type="nucleotide sequence ID" value="NZ_UFTH01000001.1"/>
</dbReference>
<dbReference type="SMR" id="Q5LCA5"/>
<dbReference type="PaxDb" id="272559-BF9343_2479"/>
<dbReference type="GeneID" id="60369883"/>
<dbReference type="KEGG" id="bfs:BF9343_2479"/>
<dbReference type="eggNOG" id="COG0422">
    <property type="taxonomic scope" value="Bacteria"/>
</dbReference>
<dbReference type="HOGENOM" id="CLU_013181_2_1_10"/>
<dbReference type="UniPathway" id="UPA00060"/>
<dbReference type="Proteomes" id="UP000006731">
    <property type="component" value="Chromosome"/>
</dbReference>
<dbReference type="GO" id="GO:0005829">
    <property type="term" value="C:cytosol"/>
    <property type="evidence" value="ECO:0007669"/>
    <property type="project" value="TreeGrafter"/>
</dbReference>
<dbReference type="GO" id="GO:0051539">
    <property type="term" value="F:4 iron, 4 sulfur cluster binding"/>
    <property type="evidence" value="ECO:0007669"/>
    <property type="project" value="UniProtKB-KW"/>
</dbReference>
<dbReference type="GO" id="GO:0016830">
    <property type="term" value="F:carbon-carbon lyase activity"/>
    <property type="evidence" value="ECO:0007669"/>
    <property type="project" value="InterPro"/>
</dbReference>
<dbReference type="GO" id="GO:0008270">
    <property type="term" value="F:zinc ion binding"/>
    <property type="evidence" value="ECO:0007669"/>
    <property type="project" value="UniProtKB-UniRule"/>
</dbReference>
<dbReference type="GO" id="GO:0009228">
    <property type="term" value="P:thiamine biosynthetic process"/>
    <property type="evidence" value="ECO:0007669"/>
    <property type="project" value="UniProtKB-KW"/>
</dbReference>
<dbReference type="GO" id="GO:0009229">
    <property type="term" value="P:thiamine diphosphate biosynthetic process"/>
    <property type="evidence" value="ECO:0007669"/>
    <property type="project" value="UniProtKB-UniRule"/>
</dbReference>
<dbReference type="FunFam" id="3.20.20.540:FF:000001">
    <property type="entry name" value="Phosphomethylpyrimidine synthase"/>
    <property type="match status" value="1"/>
</dbReference>
<dbReference type="Gene3D" id="6.10.250.620">
    <property type="match status" value="1"/>
</dbReference>
<dbReference type="Gene3D" id="3.20.20.540">
    <property type="entry name" value="Radical SAM ThiC family, central domain"/>
    <property type="match status" value="1"/>
</dbReference>
<dbReference type="HAMAP" id="MF_00089">
    <property type="entry name" value="ThiC"/>
    <property type="match status" value="1"/>
</dbReference>
<dbReference type="InterPro" id="IPR037509">
    <property type="entry name" value="ThiC"/>
</dbReference>
<dbReference type="InterPro" id="IPR025747">
    <property type="entry name" value="ThiC-associated_dom"/>
</dbReference>
<dbReference type="InterPro" id="IPR038521">
    <property type="entry name" value="ThiC/Bza_core_dom"/>
</dbReference>
<dbReference type="InterPro" id="IPR002817">
    <property type="entry name" value="ThiC/BzaA/B"/>
</dbReference>
<dbReference type="NCBIfam" id="NF006763">
    <property type="entry name" value="PRK09284.1"/>
    <property type="match status" value="1"/>
</dbReference>
<dbReference type="NCBIfam" id="NF009895">
    <property type="entry name" value="PRK13352.1"/>
    <property type="match status" value="1"/>
</dbReference>
<dbReference type="NCBIfam" id="TIGR00190">
    <property type="entry name" value="thiC"/>
    <property type="match status" value="1"/>
</dbReference>
<dbReference type="PANTHER" id="PTHR30557:SF1">
    <property type="entry name" value="PHOSPHOMETHYLPYRIMIDINE SYNTHASE, CHLOROPLASTIC"/>
    <property type="match status" value="1"/>
</dbReference>
<dbReference type="PANTHER" id="PTHR30557">
    <property type="entry name" value="THIAMINE BIOSYNTHESIS PROTEIN THIC"/>
    <property type="match status" value="1"/>
</dbReference>
<dbReference type="Pfam" id="PF13667">
    <property type="entry name" value="ThiC-associated"/>
    <property type="match status" value="1"/>
</dbReference>
<dbReference type="Pfam" id="PF01964">
    <property type="entry name" value="ThiC_Rad_SAM"/>
    <property type="match status" value="1"/>
</dbReference>
<dbReference type="SFLD" id="SFLDF00407">
    <property type="entry name" value="phosphomethylpyrimidine_syntha"/>
    <property type="match status" value="1"/>
</dbReference>
<dbReference type="SFLD" id="SFLDG01114">
    <property type="entry name" value="phosphomethylpyrimidine_syntha"/>
    <property type="match status" value="1"/>
</dbReference>
<dbReference type="SFLD" id="SFLDS00113">
    <property type="entry name" value="Radical_SAM_Phosphomethylpyrim"/>
    <property type="match status" value="1"/>
</dbReference>
<evidence type="ECO:0000255" key="1">
    <source>
        <dbReference type="HAMAP-Rule" id="MF_00089"/>
    </source>
</evidence>
<reference key="1">
    <citation type="journal article" date="2005" name="Science">
        <title>Extensive DNA inversions in the B. fragilis genome control variable gene expression.</title>
        <authorList>
            <person name="Cerdeno-Tarraga A.-M."/>
            <person name="Patrick S."/>
            <person name="Crossman L.C."/>
            <person name="Blakely G."/>
            <person name="Abratt V."/>
            <person name="Lennard N."/>
            <person name="Poxton I."/>
            <person name="Duerden B."/>
            <person name="Harris B."/>
            <person name="Quail M.A."/>
            <person name="Barron A."/>
            <person name="Clark L."/>
            <person name="Corton C."/>
            <person name="Doggett J."/>
            <person name="Holden M.T.G."/>
            <person name="Larke N."/>
            <person name="Line A."/>
            <person name="Lord A."/>
            <person name="Norbertczak H."/>
            <person name="Ormond D."/>
            <person name="Price C."/>
            <person name="Rabbinowitsch E."/>
            <person name="Woodward J."/>
            <person name="Barrell B.G."/>
            <person name="Parkhill J."/>
        </authorList>
    </citation>
    <scope>NUCLEOTIDE SEQUENCE [LARGE SCALE GENOMIC DNA]</scope>
    <source>
        <strain>ATCC 25285 / DSM 2151 / CCUG 4856 / JCM 11019 / LMG 10263 / NCTC 9343 / Onslow / VPI 2553 / EN-2</strain>
    </source>
</reference>
<organism>
    <name type="scientific">Bacteroides fragilis (strain ATCC 25285 / DSM 2151 / CCUG 4856 / JCM 11019 / LMG 10263 / NCTC 9343 / Onslow / VPI 2553 / EN-2)</name>
    <dbReference type="NCBI Taxonomy" id="272559"/>
    <lineage>
        <taxon>Bacteria</taxon>
        <taxon>Pseudomonadati</taxon>
        <taxon>Bacteroidota</taxon>
        <taxon>Bacteroidia</taxon>
        <taxon>Bacteroidales</taxon>
        <taxon>Bacteroidaceae</taxon>
        <taxon>Bacteroides</taxon>
    </lineage>
</organism>
<protein>
    <recommendedName>
        <fullName evidence="1">Phosphomethylpyrimidine synthase</fullName>
        <ecNumber evidence="1">4.1.99.17</ecNumber>
    </recommendedName>
    <alternativeName>
        <fullName evidence="1">Hydroxymethylpyrimidine phosphate synthase</fullName>
        <shortName evidence="1">HMP-P synthase</shortName>
        <shortName evidence="1">HMP-phosphate synthase</shortName>
        <shortName evidence="1">HMPP synthase</shortName>
    </alternativeName>
    <alternativeName>
        <fullName evidence="1">Thiamine biosynthesis protein ThiC</fullName>
    </alternativeName>
</protein>
<keyword id="KW-0004">4Fe-4S</keyword>
<keyword id="KW-0408">Iron</keyword>
<keyword id="KW-0411">Iron-sulfur</keyword>
<keyword id="KW-0456">Lyase</keyword>
<keyword id="KW-0479">Metal-binding</keyword>
<keyword id="KW-0949">S-adenosyl-L-methionine</keyword>
<keyword id="KW-0784">Thiamine biosynthesis</keyword>
<keyword id="KW-0862">Zinc</keyword>
<comment type="function">
    <text evidence="1">Catalyzes the synthesis of the hydroxymethylpyrimidine phosphate (HMP-P) moiety of thiamine from aminoimidazole ribotide (AIR) in a radical S-adenosyl-L-methionine (SAM)-dependent reaction.</text>
</comment>
<comment type="catalytic activity">
    <reaction evidence="1">
        <text>5-amino-1-(5-phospho-beta-D-ribosyl)imidazole + S-adenosyl-L-methionine = 4-amino-2-methyl-5-(phosphooxymethyl)pyrimidine + CO + 5'-deoxyadenosine + formate + L-methionine + 3 H(+)</text>
        <dbReference type="Rhea" id="RHEA:24840"/>
        <dbReference type="ChEBI" id="CHEBI:15378"/>
        <dbReference type="ChEBI" id="CHEBI:15740"/>
        <dbReference type="ChEBI" id="CHEBI:17245"/>
        <dbReference type="ChEBI" id="CHEBI:17319"/>
        <dbReference type="ChEBI" id="CHEBI:57844"/>
        <dbReference type="ChEBI" id="CHEBI:58354"/>
        <dbReference type="ChEBI" id="CHEBI:59789"/>
        <dbReference type="ChEBI" id="CHEBI:137981"/>
        <dbReference type="EC" id="4.1.99.17"/>
    </reaction>
</comment>
<comment type="cofactor">
    <cofactor evidence="1">
        <name>[4Fe-4S] cluster</name>
        <dbReference type="ChEBI" id="CHEBI:49883"/>
    </cofactor>
    <text evidence="1">Binds 1 [4Fe-4S] cluster per subunit. The cluster is coordinated with 3 cysteines and an exchangeable S-adenosyl-L-methionine.</text>
</comment>
<comment type="pathway">
    <text evidence="1">Cofactor biosynthesis; thiamine diphosphate biosynthesis.</text>
</comment>
<comment type="similarity">
    <text evidence="1">Belongs to the ThiC family.</text>
</comment>